<proteinExistence type="evidence at protein level"/>
<reference key="1">
    <citation type="journal article" date="1975" name="Phytochemistry">
        <title>The amino acid sequence of cytochrome c from niger-seed, Guizotia abyssinica.</title>
        <authorList>
            <person name="Ramshaw J.A.M."/>
            <person name="Boulter D."/>
        </authorList>
    </citation>
    <scope>PROTEIN SEQUENCE</scope>
    <scope>ACETYLATION AT ALA-1</scope>
    <scope>METHYLATION AT LYS-80 AND LYS-94</scope>
</reference>
<feature type="chain" id="PRO_0000108298" description="Cytochrome c">
    <location>
        <begin position="1"/>
        <end position="111"/>
    </location>
</feature>
<feature type="binding site" description="covalent">
    <location>
        <position position="22"/>
    </location>
    <ligand>
        <name>heme c</name>
        <dbReference type="ChEBI" id="CHEBI:61717"/>
    </ligand>
</feature>
<feature type="binding site" description="covalent">
    <location>
        <position position="25"/>
    </location>
    <ligand>
        <name>heme c</name>
        <dbReference type="ChEBI" id="CHEBI:61717"/>
    </ligand>
</feature>
<feature type="binding site" description="axial binding residue">
    <location>
        <position position="26"/>
    </location>
    <ligand>
        <name>heme c</name>
        <dbReference type="ChEBI" id="CHEBI:61717"/>
    </ligand>
    <ligandPart>
        <name>Fe</name>
        <dbReference type="ChEBI" id="CHEBI:18248"/>
    </ligandPart>
</feature>
<feature type="binding site" description="axial binding residue">
    <location>
        <position position="88"/>
    </location>
    <ligand>
        <name>heme c</name>
        <dbReference type="ChEBI" id="CHEBI:61717"/>
    </ligand>
    <ligandPart>
        <name>Fe</name>
        <dbReference type="ChEBI" id="CHEBI:18248"/>
    </ligandPart>
</feature>
<feature type="modified residue" description="N-acetylalanine" evidence="1">
    <location>
        <position position="1"/>
    </location>
</feature>
<feature type="modified residue" description="N6,N6,N6-trimethyllysine" evidence="1">
    <location>
        <position position="80"/>
    </location>
</feature>
<feature type="modified residue" description="N6,N6,N6-trimethyllysine" evidence="1">
    <location>
        <position position="94"/>
    </location>
</feature>
<name>CYC_GUIAB</name>
<dbReference type="PIR" id="A00061">
    <property type="entry name" value="CCNG"/>
</dbReference>
<dbReference type="GO" id="GO:0005758">
    <property type="term" value="C:mitochondrial intermembrane space"/>
    <property type="evidence" value="ECO:0007669"/>
    <property type="project" value="UniProtKB-SubCell"/>
</dbReference>
<dbReference type="GO" id="GO:0009055">
    <property type="term" value="F:electron transfer activity"/>
    <property type="evidence" value="ECO:0007669"/>
    <property type="project" value="InterPro"/>
</dbReference>
<dbReference type="GO" id="GO:0020037">
    <property type="term" value="F:heme binding"/>
    <property type="evidence" value="ECO:0007669"/>
    <property type="project" value="InterPro"/>
</dbReference>
<dbReference type="GO" id="GO:0046872">
    <property type="term" value="F:metal ion binding"/>
    <property type="evidence" value="ECO:0007669"/>
    <property type="project" value="UniProtKB-KW"/>
</dbReference>
<dbReference type="FunFam" id="1.10.760.10:FF:000001">
    <property type="entry name" value="Cytochrome c iso-1"/>
    <property type="match status" value="1"/>
</dbReference>
<dbReference type="Gene3D" id="1.10.760.10">
    <property type="entry name" value="Cytochrome c-like domain"/>
    <property type="match status" value="1"/>
</dbReference>
<dbReference type="InterPro" id="IPR009056">
    <property type="entry name" value="Cyt_c-like_dom"/>
</dbReference>
<dbReference type="InterPro" id="IPR036909">
    <property type="entry name" value="Cyt_c-like_dom_sf"/>
</dbReference>
<dbReference type="InterPro" id="IPR002327">
    <property type="entry name" value="Cyt_c_1A/1B"/>
</dbReference>
<dbReference type="PANTHER" id="PTHR11961">
    <property type="entry name" value="CYTOCHROME C"/>
    <property type="match status" value="1"/>
</dbReference>
<dbReference type="Pfam" id="PF00034">
    <property type="entry name" value="Cytochrom_C"/>
    <property type="match status" value="1"/>
</dbReference>
<dbReference type="PRINTS" id="PR00604">
    <property type="entry name" value="CYTCHRMECIAB"/>
</dbReference>
<dbReference type="SUPFAM" id="SSF46626">
    <property type="entry name" value="Cytochrome c"/>
    <property type="match status" value="1"/>
</dbReference>
<dbReference type="PROSITE" id="PS51007">
    <property type="entry name" value="CYTC"/>
    <property type="match status" value="1"/>
</dbReference>
<protein>
    <recommendedName>
        <fullName>Cytochrome c</fullName>
    </recommendedName>
</protein>
<sequence length="111" mass="11898">ASFAEAPAGDAKAGEKIFKTKCAZCHTVZKGAGHKQGPNLNGLFGRQSGTTAGYSYSAANKNKAVAWZZBSLYDYLLNPKKYIPGTKMVFPGLKKPZZRADLIAYLKASTA</sequence>
<evidence type="ECO:0000269" key="1">
    <source ref="1"/>
</evidence>
<evidence type="ECO:0000305" key="2"/>
<organism>
    <name type="scientific">Guizotia abyssinica</name>
    <name type="common">Niger</name>
    <name type="synonym">Ramtilla</name>
    <dbReference type="NCBI Taxonomy" id="4230"/>
    <lineage>
        <taxon>Eukaryota</taxon>
        <taxon>Viridiplantae</taxon>
        <taxon>Streptophyta</taxon>
        <taxon>Embryophyta</taxon>
        <taxon>Tracheophyta</taxon>
        <taxon>Spermatophyta</taxon>
        <taxon>Magnoliopsida</taxon>
        <taxon>eudicotyledons</taxon>
        <taxon>Gunneridae</taxon>
        <taxon>Pentapetalae</taxon>
        <taxon>asterids</taxon>
        <taxon>campanulids</taxon>
        <taxon>Asterales</taxon>
        <taxon>Asteraceae</taxon>
        <taxon>Asteroideae</taxon>
        <taxon>Heliantheae alliance</taxon>
        <taxon>Millerieae</taxon>
        <taxon>Guizotia</taxon>
    </lineage>
</organism>
<comment type="function">
    <text>Electron carrier protein. The oxidized form of the cytochrome c heme group can accept an electron from the heme group of the cytochrome c1 subunit of cytochrome reductase. Cytochrome c then transfers this electron to the cytochrome oxidase complex, the final protein carrier in the mitochondrial electron-transport chain.</text>
</comment>
<comment type="subcellular location">
    <subcellularLocation>
        <location>Mitochondrion intermembrane space</location>
    </subcellularLocation>
    <text>Loosely associated with the inner membrane.</text>
</comment>
<comment type="PTM">
    <text>Binds 1 heme c group covalently per subunit.</text>
</comment>
<comment type="similarity">
    <text evidence="2">Belongs to the cytochrome c family.</text>
</comment>
<comment type="online information" name="Protein Spotlight">
    <link uri="https://www.proteinspotlight.org/back_issues/076"/>
    <text>Life shuttle - Issue 76 of November 2006</text>
</comment>
<accession>P00069</accession>
<keyword id="KW-0007">Acetylation</keyword>
<keyword id="KW-0903">Direct protein sequencing</keyword>
<keyword id="KW-0249">Electron transport</keyword>
<keyword id="KW-0349">Heme</keyword>
<keyword id="KW-0408">Iron</keyword>
<keyword id="KW-0479">Metal-binding</keyword>
<keyword id="KW-0488">Methylation</keyword>
<keyword id="KW-0496">Mitochondrion</keyword>
<keyword id="KW-0679">Respiratory chain</keyword>
<keyword id="KW-0813">Transport</keyword>